<evidence type="ECO:0000255" key="1">
    <source>
        <dbReference type="HAMAP-Rule" id="MF_02113"/>
    </source>
</evidence>
<gene>
    <name evidence="1" type="primary">psmB2</name>
    <name type="ordered locus">LD85_2083</name>
</gene>
<reference key="1">
    <citation type="journal article" date="2009" name="Proc. Natl. Acad. Sci. U.S.A.">
        <title>Biogeography of the Sulfolobus islandicus pan-genome.</title>
        <authorList>
            <person name="Reno M.L."/>
            <person name="Held N.L."/>
            <person name="Fields C.J."/>
            <person name="Burke P.V."/>
            <person name="Whitaker R.J."/>
        </authorList>
    </citation>
    <scope>NUCLEOTIDE SEQUENCE [LARGE SCALE GENOMIC DNA]</scope>
    <source>
        <strain>L.D.8.5 / Lassen #2</strain>
    </source>
</reference>
<proteinExistence type="inferred from homology"/>
<feature type="propeptide" id="PRO_0000397426" description="Removed in mature form; by autocatalysis" evidence="1">
    <location>
        <begin position="1"/>
        <end position="6"/>
    </location>
</feature>
<feature type="chain" id="PRO_0000397427" description="Proteasome subunit beta 2">
    <location>
        <begin position="7"/>
        <end position="196"/>
    </location>
</feature>
<feature type="active site" description="Nucleophile" evidence="1">
    <location>
        <position position="7"/>
    </location>
</feature>
<protein>
    <recommendedName>
        <fullName evidence="1">Proteasome subunit beta 2</fullName>
        <ecNumber evidence="1">3.4.25.1</ecNumber>
    </recommendedName>
    <alternativeName>
        <fullName evidence="1">20S proteasome beta subunit 2</fullName>
    </alternativeName>
    <alternativeName>
        <fullName evidence="1">Proteasome core protein PsmB 2</fullName>
    </alternativeName>
</protein>
<accession>D2PDG6</accession>
<organism>
    <name type="scientific">Saccharolobus islandicus (strain L.D.8.5 / Lassen #2)</name>
    <name type="common">Sulfolobus islandicus</name>
    <dbReference type="NCBI Taxonomy" id="425944"/>
    <lineage>
        <taxon>Archaea</taxon>
        <taxon>Thermoproteota</taxon>
        <taxon>Thermoprotei</taxon>
        <taxon>Sulfolobales</taxon>
        <taxon>Sulfolobaceae</taxon>
        <taxon>Saccharolobus</taxon>
    </lineage>
</organism>
<dbReference type="EC" id="3.4.25.1" evidence="1"/>
<dbReference type="EMBL" id="CP001731">
    <property type="protein sequence ID" value="ADB87736.1"/>
    <property type="molecule type" value="Genomic_DNA"/>
</dbReference>
<dbReference type="SMR" id="D2PDG6"/>
<dbReference type="KEGG" id="sii:LD85_2083"/>
<dbReference type="HOGENOM" id="CLU_035750_7_2_2"/>
<dbReference type="Proteomes" id="UP000001404">
    <property type="component" value="Chromosome"/>
</dbReference>
<dbReference type="GO" id="GO:0005737">
    <property type="term" value="C:cytoplasm"/>
    <property type="evidence" value="ECO:0007669"/>
    <property type="project" value="UniProtKB-SubCell"/>
</dbReference>
<dbReference type="GO" id="GO:0019774">
    <property type="term" value="C:proteasome core complex, beta-subunit complex"/>
    <property type="evidence" value="ECO:0007669"/>
    <property type="project" value="UniProtKB-UniRule"/>
</dbReference>
<dbReference type="GO" id="GO:0004298">
    <property type="term" value="F:threonine-type endopeptidase activity"/>
    <property type="evidence" value="ECO:0007669"/>
    <property type="project" value="UniProtKB-UniRule"/>
</dbReference>
<dbReference type="GO" id="GO:0010498">
    <property type="term" value="P:proteasomal protein catabolic process"/>
    <property type="evidence" value="ECO:0007669"/>
    <property type="project" value="UniProtKB-UniRule"/>
</dbReference>
<dbReference type="FunFam" id="3.60.20.10:FF:000079">
    <property type="entry name" value="Proteasome subunit beta 2"/>
    <property type="match status" value="1"/>
</dbReference>
<dbReference type="Gene3D" id="3.60.20.10">
    <property type="entry name" value="Glutamine Phosphoribosylpyrophosphate, subunit 1, domain 1"/>
    <property type="match status" value="1"/>
</dbReference>
<dbReference type="HAMAP" id="MF_02113_A">
    <property type="entry name" value="Proteasome_B_A"/>
    <property type="match status" value="1"/>
</dbReference>
<dbReference type="InterPro" id="IPR029055">
    <property type="entry name" value="Ntn_hydrolases_N"/>
</dbReference>
<dbReference type="InterPro" id="IPR019983">
    <property type="entry name" value="Pept_T1A_Psome_bsu_arc"/>
</dbReference>
<dbReference type="InterPro" id="IPR000243">
    <property type="entry name" value="Pept_T1A_subB"/>
</dbReference>
<dbReference type="InterPro" id="IPR016050">
    <property type="entry name" value="Proteasome_bsu_CS"/>
</dbReference>
<dbReference type="InterPro" id="IPR001353">
    <property type="entry name" value="Proteasome_sua/b"/>
</dbReference>
<dbReference type="InterPro" id="IPR023333">
    <property type="entry name" value="Proteasome_suB-type"/>
</dbReference>
<dbReference type="NCBIfam" id="TIGR03634">
    <property type="entry name" value="arc_protsome_B"/>
    <property type="match status" value="1"/>
</dbReference>
<dbReference type="PANTHER" id="PTHR32194:SF0">
    <property type="entry name" value="ATP-DEPENDENT PROTEASE SUBUNIT HSLV"/>
    <property type="match status" value="1"/>
</dbReference>
<dbReference type="PANTHER" id="PTHR32194">
    <property type="entry name" value="METALLOPROTEASE TLDD"/>
    <property type="match status" value="1"/>
</dbReference>
<dbReference type="Pfam" id="PF00227">
    <property type="entry name" value="Proteasome"/>
    <property type="match status" value="1"/>
</dbReference>
<dbReference type="PRINTS" id="PR00141">
    <property type="entry name" value="PROTEASOME"/>
</dbReference>
<dbReference type="SUPFAM" id="SSF56235">
    <property type="entry name" value="N-terminal nucleophile aminohydrolases (Ntn hydrolases)"/>
    <property type="match status" value="1"/>
</dbReference>
<dbReference type="PROSITE" id="PS00854">
    <property type="entry name" value="PROTEASOME_BETA_1"/>
    <property type="match status" value="1"/>
</dbReference>
<dbReference type="PROSITE" id="PS51476">
    <property type="entry name" value="PROTEASOME_BETA_2"/>
    <property type="match status" value="1"/>
</dbReference>
<keyword id="KW-0068">Autocatalytic cleavage</keyword>
<keyword id="KW-0963">Cytoplasm</keyword>
<keyword id="KW-0378">Hydrolase</keyword>
<keyword id="KW-0645">Protease</keyword>
<keyword id="KW-0647">Proteasome</keyword>
<keyword id="KW-0888">Threonine protease</keyword>
<keyword id="KW-0865">Zymogen</keyword>
<name>PSB2_SACI9</name>
<sequence>MEELPATAIGLKVNDGIVLASERRLSYGGYVLSKQAKKVHKIGKFLMAGAGIYGDLQTLTRIMNVEIKYYEISTGKPISVHAAAKLLSVILYQYKVMPFISEILFGGVDEKGPQLYVLDPIGSLIEDNYAAVGSGARIAIGVLESEYDPNMNLDIAAQLITKAIKASIERDITSGDGIDLAIMDKKGNYENKFIPY</sequence>
<comment type="function">
    <text evidence="1">Component of the proteasome core, a large protease complex with broad specificity involved in protein degradation.</text>
</comment>
<comment type="catalytic activity">
    <reaction evidence="1">
        <text>Cleavage of peptide bonds with very broad specificity.</text>
        <dbReference type="EC" id="3.4.25.1"/>
    </reaction>
</comment>
<comment type="activity regulation">
    <text evidence="1">The formation of the proteasomal ATPase PAN-20S proteasome complex, via the docking of the C-termini of PAN into the intersubunit pockets in the alpha-rings, triggers opening of the gate for substrate entry. Interconversion between the open-gate and close-gate conformations leads to a dynamic regulation of the 20S proteasome proteolysis activity.</text>
</comment>
<comment type="subunit">
    <text evidence="1">The 20S proteasome core is composed of 14 alpha and 14 beta subunits that assemble into four stacked heptameric rings, resulting in a barrel-shaped structure. The two inner rings, each composed of seven catalytic beta subunits, are sandwiched by two outer rings, each composed of seven alpha subunits. The catalytic chamber with the active sites is on the inside of the barrel. Has a gated structure, the ends of the cylinder being occluded by the N-termini of the alpha-subunits. Is capped at one or both ends by the proteasome regulatory ATPase, PAN.</text>
</comment>
<comment type="subcellular location">
    <subcellularLocation>
        <location evidence="1">Cytoplasm</location>
    </subcellularLocation>
</comment>
<comment type="similarity">
    <text evidence="1">Belongs to the peptidase T1B family.</text>
</comment>